<protein>
    <recommendedName>
        <fullName evidence="1">Small ribosomal subunit protein uS8</fullName>
    </recommendedName>
    <alternativeName>
        <fullName evidence="2">30S ribosomal protein S8</fullName>
    </alternativeName>
</protein>
<reference key="1">
    <citation type="submission" date="2006-10" db="EMBL/GenBank/DDBJ databases">
        <authorList>
            <person name="Fleischmann R.D."/>
            <person name="Dodson R.J."/>
            <person name="Haft D.H."/>
            <person name="Merkel J.S."/>
            <person name="Nelson W.C."/>
            <person name="Fraser C.M."/>
        </authorList>
    </citation>
    <scope>NUCLEOTIDE SEQUENCE [LARGE SCALE GENOMIC DNA]</scope>
    <source>
        <strain>104</strain>
    </source>
</reference>
<gene>
    <name evidence="1" type="primary">rpsH</name>
    <name type="ordered locus">MAV_4451</name>
</gene>
<evidence type="ECO:0000255" key="1">
    <source>
        <dbReference type="HAMAP-Rule" id="MF_01302"/>
    </source>
</evidence>
<evidence type="ECO:0000305" key="2"/>
<accession>A0QKZ8</accession>
<name>RS8_MYCA1</name>
<sequence length="132" mass="14426">MTMTDPIADFLTRLRNANSAYHDEVTLPHSKLKANIAQILKNEGYISDFRTEDARVGKSLIVQLKYGPSRERSIAGLRRVSKPGLRVYAKSTNLPRVLGGLGVAIISTSSGLLTDRQAARQGVGGEVLAYVW</sequence>
<proteinExistence type="inferred from homology"/>
<organism>
    <name type="scientific">Mycobacterium avium (strain 104)</name>
    <dbReference type="NCBI Taxonomy" id="243243"/>
    <lineage>
        <taxon>Bacteria</taxon>
        <taxon>Bacillati</taxon>
        <taxon>Actinomycetota</taxon>
        <taxon>Actinomycetes</taxon>
        <taxon>Mycobacteriales</taxon>
        <taxon>Mycobacteriaceae</taxon>
        <taxon>Mycobacterium</taxon>
        <taxon>Mycobacterium avium complex (MAC)</taxon>
    </lineage>
</organism>
<feature type="chain" id="PRO_0000290878" description="Small ribosomal subunit protein uS8">
    <location>
        <begin position="1"/>
        <end position="132"/>
    </location>
</feature>
<comment type="function">
    <text evidence="1">One of the primary rRNA binding proteins, it binds directly to 16S rRNA central domain where it helps coordinate assembly of the platform of the 30S subunit.</text>
</comment>
<comment type="subunit">
    <text evidence="1">Part of the 30S ribosomal subunit. Contacts proteins S5 and S12.</text>
</comment>
<comment type="similarity">
    <text evidence="1">Belongs to the universal ribosomal protein uS8 family.</text>
</comment>
<comment type="sequence caution" evidence="2">
    <conflict type="erroneous initiation">
        <sequence resource="EMBL-CDS" id="ABK68887"/>
    </conflict>
</comment>
<keyword id="KW-0687">Ribonucleoprotein</keyword>
<keyword id="KW-0689">Ribosomal protein</keyword>
<keyword id="KW-0694">RNA-binding</keyword>
<keyword id="KW-0699">rRNA-binding</keyword>
<dbReference type="EMBL" id="CP000479">
    <property type="protein sequence ID" value="ABK68887.1"/>
    <property type="status" value="ALT_INIT"/>
    <property type="molecule type" value="Genomic_DNA"/>
</dbReference>
<dbReference type="RefSeq" id="WP_003873498.1">
    <property type="nucleotide sequence ID" value="NC_008595.1"/>
</dbReference>
<dbReference type="SMR" id="A0QKZ8"/>
<dbReference type="GeneID" id="75271965"/>
<dbReference type="KEGG" id="mav:MAV_4451"/>
<dbReference type="HOGENOM" id="CLU_098428_0_1_11"/>
<dbReference type="Proteomes" id="UP000001574">
    <property type="component" value="Chromosome"/>
</dbReference>
<dbReference type="GO" id="GO:1990904">
    <property type="term" value="C:ribonucleoprotein complex"/>
    <property type="evidence" value="ECO:0007669"/>
    <property type="project" value="UniProtKB-KW"/>
</dbReference>
<dbReference type="GO" id="GO:0005840">
    <property type="term" value="C:ribosome"/>
    <property type="evidence" value="ECO:0007669"/>
    <property type="project" value="UniProtKB-KW"/>
</dbReference>
<dbReference type="GO" id="GO:0019843">
    <property type="term" value="F:rRNA binding"/>
    <property type="evidence" value="ECO:0007669"/>
    <property type="project" value="UniProtKB-UniRule"/>
</dbReference>
<dbReference type="GO" id="GO:0003735">
    <property type="term" value="F:structural constituent of ribosome"/>
    <property type="evidence" value="ECO:0007669"/>
    <property type="project" value="InterPro"/>
</dbReference>
<dbReference type="GO" id="GO:0006412">
    <property type="term" value="P:translation"/>
    <property type="evidence" value="ECO:0007669"/>
    <property type="project" value="UniProtKB-UniRule"/>
</dbReference>
<dbReference type="FunFam" id="3.30.1370.30:FF:000002">
    <property type="entry name" value="30S ribosomal protein S8"/>
    <property type="match status" value="1"/>
</dbReference>
<dbReference type="FunFam" id="3.30.1490.10:FF:000001">
    <property type="entry name" value="30S ribosomal protein S8"/>
    <property type="match status" value="1"/>
</dbReference>
<dbReference type="Gene3D" id="3.30.1370.30">
    <property type="match status" value="1"/>
</dbReference>
<dbReference type="Gene3D" id="3.30.1490.10">
    <property type="match status" value="1"/>
</dbReference>
<dbReference type="HAMAP" id="MF_01302_B">
    <property type="entry name" value="Ribosomal_uS8_B"/>
    <property type="match status" value="1"/>
</dbReference>
<dbReference type="InterPro" id="IPR000630">
    <property type="entry name" value="Ribosomal_uS8"/>
</dbReference>
<dbReference type="InterPro" id="IPR047863">
    <property type="entry name" value="Ribosomal_uS8_CS"/>
</dbReference>
<dbReference type="InterPro" id="IPR035987">
    <property type="entry name" value="Ribosomal_uS8_sf"/>
</dbReference>
<dbReference type="NCBIfam" id="NF001109">
    <property type="entry name" value="PRK00136.1"/>
    <property type="match status" value="1"/>
</dbReference>
<dbReference type="PANTHER" id="PTHR11758">
    <property type="entry name" value="40S RIBOSOMAL PROTEIN S15A"/>
    <property type="match status" value="1"/>
</dbReference>
<dbReference type="Pfam" id="PF00410">
    <property type="entry name" value="Ribosomal_S8"/>
    <property type="match status" value="1"/>
</dbReference>
<dbReference type="SUPFAM" id="SSF56047">
    <property type="entry name" value="Ribosomal protein S8"/>
    <property type="match status" value="1"/>
</dbReference>
<dbReference type="PROSITE" id="PS00053">
    <property type="entry name" value="RIBOSOMAL_S8"/>
    <property type="match status" value="1"/>
</dbReference>